<comment type="function">
    <text evidence="1">Proto-oncogene that may play a role in differentiation and lymphopoiesis. NF-kappa-B is a pleiotropic transcription factor which is present in almost all cell types and is involved in many biological processes such as inflammation, immunity, differentiation, cell growth, tumorigenesis and apoptosis. NF-kappa-B is a homo- or heterodimeric complex formed by the Rel-like domain-containing proteins RELA/p65, RELB, NFKB1/p105, NFKB1/p50, REL and NFKB2/p52. The dimers bind at kappa-B sites in the DNA of their target genes and the individual dimers have distinct preferences for different kappa-B sites that they can bind with distinguishable affinity and specificity. Different dimer combinations act as transcriptional activators or repressors, respectively. NF-kappa-B is controlled by various mechanisms of post-translational modification and subcellular compartmentalization as well as by interactions with other cofactors or corepressors. NF-kappa-B complexes are held in the cytoplasm in an inactive state complexed with members of the NF-kappa-B inhibitor (I-kappa-B) family. In a conventional activation pathway, I-kappa-B is phosphorylated by I-kappa-B kinases (IKKs) in response to different activators, subsequently degraded thus liberating the active NF-kappa-B complex which translocates to the nucleus. The NF-kappa-B heterodimer RELA/p65-c-Rel is a transcriptional activator (By similarity).</text>
</comment>
<comment type="subunit">
    <text evidence="1">Component of the NF-kappa-B p65-c-Rel complex. Component of the NF-kappa-B p50-c-Rel complex. Component of the NF-kappa-B p52-c-Rel complex. Homodimer; component of the NF-kappa-B c-Rel-c-Rel complex. Interacts with NKIRAS1. Interacts with NFKBIB. Interacts with NFKBIE (By similarity).</text>
</comment>
<comment type="interaction">
    <interactant intactId="EBI-5323778">
        <id>P15307</id>
    </interactant>
    <interactant intactId="EBI-644469">
        <id>Q60778</id>
        <label>Nfkbib</label>
    </interactant>
    <organismsDiffer>false</organismsDiffer>
    <experiments>5</experiments>
</comment>
<comment type="subcellular location">
    <subcellularLocation>
        <location evidence="5">Nucleus</location>
    </subcellularLocation>
</comment>
<accession>P15307</accession>
<protein>
    <recommendedName>
        <fullName>Proto-oncogene c-Rel</fullName>
    </recommendedName>
</protein>
<organism>
    <name type="scientific">Mus musculus</name>
    <name type="common">Mouse</name>
    <dbReference type="NCBI Taxonomy" id="10090"/>
    <lineage>
        <taxon>Eukaryota</taxon>
        <taxon>Metazoa</taxon>
        <taxon>Chordata</taxon>
        <taxon>Craniata</taxon>
        <taxon>Vertebrata</taxon>
        <taxon>Euteleostomi</taxon>
        <taxon>Mammalia</taxon>
        <taxon>Eutheria</taxon>
        <taxon>Euarchontoglires</taxon>
        <taxon>Glires</taxon>
        <taxon>Rodentia</taxon>
        <taxon>Myomorpha</taxon>
        <taxon>Muroidea</taxon>
        <taxon>Muridae</taxon>
        <taxon>Murinae</taxon>
        <taxon>Mus</taxon>
        <taxon>Mus</taxon>
    </lineage>
</organism>
<name>REL_MOUSE</name>
<reference key="1">
    <citation type="journal article" date="1989" name="Oncogene Res.">
        <title>Structure of a mammalian c-rel protein deduced from the nucleotide sequence of murine cDNA clones.</title>
        <authorList>
            <person name="Grumont R.J."/>
            <person name="Gerondakis S."/>
        </authorList>
    </citation>
    <scope>NUCLEOTIDE SEQUENCE [MRNA]</scope>
    <source>
        <strain>BALB/cJ</strain>
        <tissue>Spleen</tissue>
    </source>
</reference>
<reference key="2">
    <citation type="journal article" date="1990" name="Oncogene Res.">
        <title>The murine c-rel proto-oncogene encodes two mRNAs the expression of which is modulated by lymphoid stimuli.</title>
        <authorList>
            <person name="Grumont R.J."/>
            <person name="Gerondakis S."/>
        </authorList>
    </citation>
    <scope>SEQUENCE REVISION</scope>
</reference>
<reference key="3">
    <citation type="journal article" date="1990" name="Mol. Cell. Biol.">
        <title>The mouse c-rel protein has an N-terminal regulatory domain and a C-terminal transcriptional transactivation domain.</title>
        <authorList>
            <person name="Bull P."/>
            <person name="Morley K.L."/>
            <person name="Hoekstra M.F."/>
            <person name="Hunter T."/>
            <person name="Verma I.M."/>
        </authorList>
    </citation>
    <scope>NUCLEOTIDE SEQUENCE [MRNA]</scope>
</reference>
<reference key="4">
    <citation type="journal article" date="1996" name="Mol. Cell. Biol.">
        <title>Role of unphosphorylated, newly synthesized IkappaB beta in persistent activation of NF-kappaB.</title>
        <authorList>
            <person name="Suyang H."/>
            <person name="Phillips R.J."/>
            <person name="Douglas I."/>
            <person name="Ghosh S."/>
        </authorList>
    </citation>
    <scope>INTERACTION WITH NFKBIB</scope>
</reference>
<reference key="5">
    <citation type="journal article" date="2020" name="Blood Cancer J.">
        <title>Nfkbie-deficiency leads to increased susceptibility to develop B-cell lymphoproliferative disorders in aged mice.</title>
        <authorList>
            <person name="Della-Valle V."/>
            <person name="Roos-Weil D."/>
            <person name="Scourzic L."/>
            <person name="Mouly E."/>
            <person name="Aid Z."/>
            <person name="Darwiche W."/>
            <person name="Lecluse Y."/>
            <person name="Damm F."/>
            <person name="Memet S."/>
            <person name="Mercher T."/>
            <person name="Aoufouchi S."/>
            <person name="Nguyen-Khac F."/>
            <person name="Bernard O.A."/>
            <person name="Ghamlouch H."/>
        </authorList>
    </citation>
    <scope>SUBCELLULAR LOCATION</scope>
</reference>
<gene>
    <name type="primary">Rel</name>
</gene>
<keyword id="KW-0007">Acetylation</keyword>
<keyword id="KW-0238">DNA-binding</keyword>
<keyword id="KW-0539">Nucleus</keyword>
<keyword id="KW-0597">Phosphoprotein</keyword>
<keyword id="KW-0656">Proto-oncogene</keyword>
<keyword id="KW-1185">Reference proteome</keyword>
<keyword id="KW-0804">Transcription</keyword>
<keyword id="KW-0805">Transcription regulation</keyword>
<feature type="initiator methionine" description="Removed" evidence="2">
    <location>
        <position position="1"/>
    </location>
</feature>
<feature type="chain" id="PRO_0000205166" description="Proto-oncogene c-Rel">
    <location>
        <begin position="2"/>
        <end position="587"/>
    </location>
</feature>
<feature type="domain" description="RHD" evidence="4">
    <location>
        <begin position="8"/>
        <end position="297"/>
    </location>
</feature>
<feature type="region of interest" description="Transcriptional transactivator">
    <location>
        <begin position="403"/>
        <end position="468"/>
    </location>
</feature>
<feature type="short sequence motif" description="Nuclear localization signal" evidence="3">
    <location>
        <begin position="291"/>
        <end position="296"/>
    </location>
</feature>
<feature type="modified residue" description="N-acetylalanine" evidence="2">
    <location>
        <position position="2"/>
    </location>
</feature>
<feature type="modified residue" description="Phosphoserine; by PKA" evidence="3">
    <location>
        <position position="267"/>
    </location>
</feature>
<feature type="sequence conflict" description="In Ref. 3; no nucleotide entry." evidence="6" ref="3">
    <original>G</original>
    <variation>E</variation>
    <location>
        <position position="117"/>
    </location>
</feature>
<feature type="sequence conflict" description="In Ref. 3; no nucleotide entry." evidence="6" ref="3">
    <original>G</original>
    <variation>P</variation>
    <location>
        <position position="133"/>
    </location>
</feature>
<feature type="sequence conflict" description="In Ref. 3; no nucleotide entry." evidence="6" ref="3">
    <original>CVFMF</original>
    <variation>LCFQV</variation>
    <location>
        <begin position="150"/>
        <end position="154"/>
    </location>
</feature>
<feature type="sequence conflict" description="In Ref. 3; no nucleotide entry." evidence="6" ref="3">
    <original>D</original>
    <variation>H</variation>
    <location>
        <position position="160"/>
    </location>
</feature>
<feature type="sequence conflict" description="In Ref. 3; no nucleotide entry." evidence="6" ref="3">
    <original>S</original>
    <variation>SS</variation>
    <location>
        <position position="567"/>
    </location>
</feature>
<evidence type="ECO:0000250" key="1"/>
<evidence type="ECO:0000250" key="2">
    <source>
        <dbReference type="UniProtKB" id="Q04864"/>
    </source>
</evidence>
<evidence type="ECO:0000255" key="3"/>
<evidence type="ECO:0000255" key="4">
    <source>
        <dbReference type="PROSITE-ProRule" id="PRU00265"/>
    </source>
</evidence>
<evidence type="ECO:0000269" key="5">
    <source>
    </source>
</evidence>
<evidence type="ECO:0000305" key="6"/>
<sequence length="587" mass="64960">MASSGYNPYVEIIEQPRQRGMRFRYKCEGRSAGSIPGERSTDNNRTYPSVQIMNYYGKGKIRITLVTKNDPYKPHPHDLVGKDCRDGYYEAEFGPERRPLFFQNLGIRCVKKKEVKGAIILRISAGINPFNVGEQQLLDIEDCDLNVVRCVFMFFLPDEDGNFTTALPPIVSNPIYDNRAPNTAELRICRVNKNCGSVRGGDEIFLLCDKVQKDDIEVRFVLNDWEARGVFSQADVHRQVAIVFKTPPYCKAILEPVTVKMQLRRPSDQEVSESMDFRYLPDEKDAYGNKSKKQKTTLIFQKLLQDCGHFTEKPRTAPLGSTGEGRFIKKESNLFSHGTVLPEMPRSSGVPGQAEPYYSSCGSISSGLPHHPPAIPSVAHQPTSWPPVTHPTSHPVSTNTLSTFSAGTLSSNSQGILPFLEGPGVSDLSASNSCLYNPDDLARMETPSMSPTDLYSISDVNMLSTRPLSVMAPSTDGMGDTDNPRLVSINLENPSCNARLGPRDLRQLHQMSPASLSAGTSSSSVFVSQSDAFDRSNFSCVDNGLMNEPGLSDDANNPTFVQSSHYSVNTLQSEQLSDPFTYGFFKI</sequence>
<proteinExistence type="evidence at protein level"/>
<dbReference type="EMBL" id="X15842">
    <property type="protein sequence ID" value="CAA33843.1"/>
    <property type="status" value="ALT_SEQ"/>
    <property type="molecule type" value="mRNA"/>
</dbReference>
<dbReference type="EMBL" id="X60271">
    <property type="protein sequence ID" value="CAA42817.1"/>
    <property type="molecule type" value="mRNA"/>
</dbReference>
<dbReference type="PIR" id="A60367">
    <property type="entry name" value="A60367"/>
</dbReference>
<dbReference type="SMR" id="P15307"/>
<dbReference type="DIP" id="DIP-59241N"/>
<dbReference type="FunCoup" id="P15307">
    <property type="interactions" value="893"/>
</dbReference>
<dbReference type="IntAct" id="P15307">
    <property type="interactions" value="7"/>
</dbReference>
<dbReference type="STRING" id="10090.ENSMUSP00000099928"/>
<dbReference type="GlyGen" id="P15307">
    <property type="glycosylation" value="1 site, 1 O-linked glycan (1 site)"/>
</dbReference>
<dbReference type="iPTMnet" id="P15307"/>
<dbReference type="PhosphoSitePlus" id="P15307"/>
<dbReference type="jPOST" id="P15307"/>
<dbReference type="PaxDb" id="10090-ENSMUSP00000099928"/>
<dbReference type="ProteomicsDB" id="253217"/>
<dbReference type="Pumba" id="P15307"/>
<dbReference type="AGR" id="MGI:97897"/>
<dbReference type="MGI" id="MGI:97897">
    <property type="gene designation" value="Rel"/>
</dbReference>
<dbReference type="eggNOG" id="ENOG502QQS6">
    <property type="taxonomic scope" value="Eukaryota"/>
</dbReference>
<dbReference type="InParanoid" id="P15307"/>
<dbReference type="Reactome" id="R-MMU-1169091">
    <property type="pathway name" value="Activation of NF-kappaB in B cells"/>
</dbReference>
<dbReference type="ChiTaRS" id="Rel">
    <property type="organism name" value="mouse"/>
</dbReference>
<dbReference type="PRO" id="PR:P15307"/>
<dbReference type="Proteomes" id="UP000000589">
    <property type="component" value="Unplaced"/>
</dbReference>
<dbReference type="RNAct" id="P15307">
    <property type="molecule type" value="protein"/>
</dbReference>
<dbReference type="GO" id="GO:0005737">
    <property type="term" value="C:cytoplasm"/>
    <property type="evidence" value="ECO:0000314"/>
    <property type="project" value="MGI"/>
</dbReference>
<dbReference type="GO" id="GO:0005634">
    <property type="term" value="C:nucleus"/>
    <property type="evidence" value="ECO:0000314"/>
    <property type="project" value="MGI"/>
</dbReference>
<dbReference type="GO" id="GO:0003677">
    <property type="term" value="F:DNA binding"/>
    <property type="evidence" value="ECO:0007669"/>
    <property type="project" value="UniProtKB-KW"/>
</dbReference>
<dbReference type="GO" id="GO:0003700">
    <property type="term" value="F:DNA-binding transcription factor activity"/>
    <property type="evidence" value="ECO:0000314"/>
    <property type="project" value="MGI"/>
</dbReference>
<dbReference type="GO" id="GO:0045893">
    <property type="term" value="P:positive regulation of DNA-templated transcription"/>
    <property type="evidence" value="ECO:0000314"/>
    <property type="project" value="MGI"/>
</dbReference>
<dbReference type="GO" id="GO:0032735">
    <property type="term" value="P:positive regulation of interleukin-12 production"/>
    <property type="evidence" value="ECO:0000315"/>
    <property type="project" value="MGI"/>
</dbReference>
<dbReference type="CDD" id="cd01177">
    <property type="entry name" value="IPT_NFkappaB"/>
    <property type="match status" value="1"/>
</dbReference>
<dbReference type="CDD" id="cd07933">
    <property type="entry name" value="RHD-n_c-Rel"/>
    <property type="match status" value="1"/>
</dbReference>
<dbReference type="FunFam" id="2.60.40.340:FF:000003">
    <property type="entry name" value="NFkB p65 transcription factor"/>
    <property type="match status" value="1"/>
</dbReference>
<dbReference type="FunFam" id="2.60.40.10:FF:000046">
    <property type="entry name" value="Nuclear factor NF-kappa-B p105 subunit"/>
    <property type="match status" value="1"/>
</dbReference>
<dbReference type="Gene3D" id="2.60.40.10">
    <property type="entry name" value="Immunoglobulins"/>
    <property type="match status" value="1"/>
</dbReference>
<dbReference type="Gene3D" id="2.60.40.340">
    <property type="entry name" value="Rel homology domain (RHD), DNA-binding domain"/>
    <property type="match status" value="1"/>
</dbReference>
<dbReference type="InterPro" id="IPR013783">
    <property type="entry name" value="Ig-like_fold"/>
</dbReference>
<dbReference type="InterPro" id="IPR014756">
    <property type="entry name" value="Ig_E-set"/>
</dbReference>
<dbReference type="InterPro" id="IPR002909">
    <property type="entry name" value="IPT_dom"/>
</dbReference>
<dbReference type="InterPro" id="IPR033926">
    <property type="entry name" value="IPT_NFkappaB"/>
</dbReference>
<dbReference type="InterPro" id="IPR000451">
    <property type="entry name" value="NFkB/Dor"/>
</dbReference>
<dbReference type="InterPro" id="IPR008967">
    <property type="entry name" value="p53-like_TF_DNA-bd_sf"/>
</dbReference>
<dbReference type="InterPro" id="IPR042845">
    <property type="entry name" value="RHD-n_c-Rel"/>
</dbReference>
<dbReference type="InterPro" id="IPR030492">
    <property type="entry name" value="RHD_CS"/>
</dbReference>
<dbReference type="InterPro" id="IPR032397">
    <property type="entry name" value="RHD_dimer"/>
</dbReference>
<dbReference type="InterPro" id="IPR011539">
    <property type="entry name" value="RHD_DNA_bind_dom"/>
</dbReference>
<dbReference type="InterPro" id="IPR037059">
    <property type="entry name" value="RHD_DNA_bind_dom_sf"/>
</dbReference>
<dbReference type="PANTHER" id="PTHR24169">
    <property type="entry name" value="NUCLEAR FACTOR NF-KAPPA-B PROTEIN"/>
    <property type="match status" value="1"/>
</dbReference>
<dbReference type="PANTHER" id="PTHR24169:SF4">
    <property type="entry name" value="PROTO-ONCOGENE C-REL"/>
    <property type="match status" value="1"/>
</dbReference>
<dbReference type="Pfam" id="PF16179">
    <property type="entry name" value="RHD_dimer"/>
    <property type="match status" value="1"/>
</dbReference>
<dbReference type="Pfam" id="PF00554">
    <property type="entry name" value="RHD_DNA_bind"/>
    <property type="match status" value="1"/>
</dbReference>
<dbReference type="PRINTS" id="PR00057">
    <property type="entry name" value="NFKBTNSCPFCT"/>
</dbReference>
<dbReference type="SMART" id="SM00429">
    <property type="entry name" value="IPT"/>
    <property type="match status" value="1"/>
</dbReference>
<dbReference type="SUPFAM" id="SSF81296">
    <property type="entry name" value="E set domains"/>
    <property type="match status" value="1"/>
</dbReference>
<dbReference type="SUPFAM" id="SSF49417">
    <property type="entry name" value="p53-like transcription factors"/>
    <property type="match status" value="1"/>
</dbReference>
<dbReference type="PROSITE" id="PS01204">
    <property type="entry name" value="REL_1"/>
    <property type="match status" value="1"/>
</dbReference>
<dbReference type="PROSITE" id="PS50254">
    <property type="entry name" value="REL_2"/>
    <property type="match status" value="1"/>
</dbReference>